<feature type="chain" id="PRO_0000259276" description="D-aminoacyl-tRNA deacylase">
    <location>
        <begin position="1"/>
        <end position="150"/>
    </location>
</feature>
<feature type="short sequence motif" description="Gly-cisPro motif, important for rejection of L-amino acids" evidence="1">
    <location>
        <begin position="138"/>
        <end position="139"/>
    </location>
</feature>
<accession>Q47K67</accession>
<evidence type="ECO:0000255" key="1">
    <source>
        <dbReference type="HAMAP-Rule" id="MF_00518"/>
    </source>
</evidence>
<reference key="1">
    <citation type="journal article" date="2009" name="BMC Genomics">
        <title>Metabolic analysis of the soil microbe Dechloromonas aromatica str. RCB: indications of a surprisingly complex life-style and cryptic anaerobic pathways for aromatic degradation.</title>
        <authorList>
            <person name="Salinero K.K."/>
            <person name="Keller K."/>
            <person name="Feil W.S."/>
            <person name="Feil H."/>
            <person name="Trong S."/>
            <person name="Di Bartolo G."/>
            <person name="Lapidus A."/>
        </authorList>
    </citation>
    <scope>NUCLEOTIDE SEQUENCE [LARGE SCALE GENOMIC DNA]</scope>
    <source>
        <strain>RCB</strain>
    </source>
</reference>
<sequence>MRVVVQRVRAASVAVDGDIVGKIGTGLLVLAGFEEADSETDLDWMAGKIVRLRLFADESGVMNRNVLDAGGEVLAVSQFTLYASVKKGNRPSWSRAARGEVSQPLFERFVTKLSATLGKAVPTGVFGADMQVSLINDGPVTLTIDSKVPE</sequence>
<organism>
    <name type="scientific">Dechloromonas aromatica (strain RCB)</name>
    <dbReference type="NCBI Taxonomy" id="159087"/>
    <lineage>
        <taxon>Bacteria</taxon>
        <taxon>Pseudomonadati</taxon>
        <taxon>Pseudomonadota</taxon>
        <taxon>Betaproteobacteria</taxon>
        <taxon>Rhodocyclales</taxon>
        <taxon>Azonexaceae</taxon>
        <taxon>Dechloromonas</taxon>
    </lineage>
</organism>
<protein>
    <recommendedName>
        <fullName evidence="1">D-aminoacyl-tRNA deacylase</fullName>
        <shortName evidence="1">DTD</shortName>
        <ecNumber evidence="1">3.1.1.96</ecNumber>
    </recommendedName>
    <alternativeName>
        <fullName evidence="1">Gly-tRNA(Ala) deacylase</fullName>
    </alternativeName>
</protein>
<proteinExistence type="inferred from homology"/>
<gene>
    <name evidence="1" type="primary">dtd</name>
    <name type="ordered locus">Daro_0005</name>
</gene>
<name>DTD_DECAR</name>
<dbReference type="EC" id="3.1.1.96" evidence="1"/>
<dbReference type="EMBL" id="CP000089">
    <property type="protein sequence ID" value="AAZ44764.1"/>
    <property type="molecule type" value="Genomic_DNA"/>
</dbReference>
<dbReference type="SMR" id="Q47K67"/>
<dbReference type="STRING" id="159087.Daro_0005"/>
<dbReference type="KEGG" id="dar:Daro_0005"/>
<dbReference type="eggNOG" id="COG1490">
    <property type="taxonomic scope" value="Bacteria"/>
</dbReference>
<dbReference type="HOGENOM" id="CLU_076901_1_0_4"/>
<dbReference type="OrthoDB" id="9801395at2"/>
<dbReference type="GO" id="GO:0005737">
    <property type="term" value="C:cytoplasm"/>
    <property type="evidence" value="ECO:0007669"/>
    <property type="project" value="UniProtKB-SubCell"/>
</dbReference>
<dbReference type="GO" id="GO:0051500">
    <property type="term" value="F:D-tyrosyl-tRNA(Tyr) deacylase activity"/>
    <property type="evidence" value="ECO:0007669"/>
    <property type="project" value="TreeGrafter"/>
</dbReference>
<dbReference type="GO" id="GO:0106026">
    <property type="term" value="F:Gly-tRNA(Ala) deacylase activity"/>
    <property type="evidence" value="ECO:0007669"/>
    <property type="project" value="UniProtKB-UniRule"/>
</dbReference>
<dbReference type="GO" id="GO:0043908">
    <property type="term" value="F:Ser(Gly)-tRNA(Ala) hydrolase activity"/>
    <property type="evidence" value="ECO:0007669"/>
    <property type="project" value="UniProtKB-UniRule"/>
</dbReference>
<dbReference type="GO" id="GO:0000049">
    <property type="term" value="F:tRNA binding"/>
    <property type="evidence" value="ECO:0007669"/>
    <property type="project" value="UniProtKB-UniRule"/>
</dbReference>
<dbReference type="GO" id="GO:0019478">
    <property type="term" value="P:D-amino acid catabolic process"/>
    <property type="evidence" value="ECO:0007669"/>
    <property type="project" value="UniProtKB-UniRule"/>
</dbReference>
<dbReference type="FunFam" id="3.50.80.10:FF:000001">
    <property type="entry name" value="D-aminoacyl-tRNA deacylase"/>
    <property type="match status" value="1"/>
</dbReference>
<dbReference type="Gene3D" id="3.50.80.10">
    <property type="entry name" value="D-tyrosyl-tRNA(Tyr) deacylase"/>
    <property type="match status" value="1"/>
</dbReference>
<dbReference type="HAMAP" id="MF_00518">
    <property type="entry name" value="Deacylase_Dtd"/>
    <property type="match status" value="1"/>
</dbReference>
<dbReference type="InterPro" id="IPR003732">
    <property type="entry name" value="Daa-tRNA_deacyls_DTD"/>
</dbReference>
<dbReference type="InterPro" id="IPR023509">
    <property type="entry name" value="DTD-like_sf"/>
</dbReference>
<dbReference type="NCBIfam" id="TIGR00256">
    <property type="entry name" value="D-aminoacyl-tRNA deacylase"/>
    <property type="match status" value="1"/>
</dbReference>
<dbReference type="PANTHER" id="PTHR10472:SF5">
    <property type="entry name" value="D-AMINOACYL-TRNA DEACYLASE 1"/>
    <property type="match status" value="1"/>
</dbReference>
<dbReference type="PANTHER" id="PTHR10472">
    <property type="entry name" value="D-TYROSYL-TRNA TYR DEACYLASE"/>
    <property type="match status" value="1"/>
</dbReference>
<dbReference type="Pfam" id="PF02580">
    <property type="entry name" value="Tyr_Deacylase"/>
    <property type="match status" value="1"/>
</dbReference>
<dbReference type="SUPFAM" id="SSF69500">
    <property type="entry name" value="DTD-like"/>
    <property type="match status" value="1"/>
</dbReference>
<keyword id="KW-0963">Cytoplasm</keyword>
<keyword id="KW-0378">Hydrolase</keyword>
<keyword id="KW-0694">RNA-binding</keyword>
<keyword id="KW-0820">tRNA-binding</keyword>
<comment type="function">
    <text evidence="1">An aminoacyl-tRNA editing enzyme that deacylates mischarged D-aminoacyl-tRNAs. Also deacylates mischarged glycyl-tRNA(Ala), protecting cells against glycine mischarging by AlaRS. Acts via tRNA-based rather than protein-based catalysis; rejects L-amino acids rather than detecting D-amino acids in the active site. By recycling D-aminoacyl-tRNA to D-amino acids and free tRNA molecules, this enzyme counteracts the toxicity associated with the formation of D-aminoacyl-tRNA entities in vivo and helps enforce protein L-homochirality.</text>
</comment>
<comment type="catalytic activity">
    <reaction evidence="1">
        <text>glycyl-tRNA(Ala) + H2O = tRNA(Ala) + glycine + H(+)</text>
        <dbReference type="Rhea" id="RHEA:53744"/>
        <dbReference type="Rhea" id="RHEA-COMP:9657"/>
        <dbReference type="Rhea" id="RHEA-COMP:13640"/>
        <dbReference type="ChEBI" id="CHEBI:15377"/>
        <dbReference type="ChEBI" id="CHEBI:15378"/>
        <dbReference type="ChEBI" id="CHEBI:57305"/>
        <dbReference type="ChEBI" id="CHEBI:78442"/>
        <dbReference type="ChEBI" id="CHEBI:78522"/>
        <dbReference type="EC" id="3.1.1.96"/>
    </reaction>
</comment>
<comment type="catalytic activity">
    <reaction evidence="1">
        <text>a D-aminoacyl-tRNA + H2O = a tRNA + a D-alpha-amino acid + H(+)</text>
        <dbReference type="Rhea" id="RHEA:13953"/>
        <dbReference type="Rhea" id="RHEA-COMP:10123"/>
        <dbReference type="Rhea" id="RHEA-COMP:10124"/>
        <dbReference type="ChEBI" id="CHEBI:15377"/>
        <dbReference type="ChEBI" id="CHEBI:15378"/>
        <dbReference type="ChEBI" id="CHEBI:59871"/>
        <dbReference type="ChEBI" id="CHEBI:78442"/>
        <dbReference type="ChEBI" id="CHEBI:79333"/>
        <dbReference type="EC" id="3.1.1.96"/>
    </reaction>
</comment>
<comment type="subunit">
    <text evidence="1">Homodimer.</text>
</comment>
<comment type="subcellular location">
    <subcellularLocation>
        <location evidence="1">Cytoplasm</location>
    </subcellularLocation>
</comment>
<comment type="domain">
    <text evidence="1">A Gly-cisPro motif from one monomer fits into the active site of the other monomer to allow specific chiral rejection of L-amino acids.</text>
</comment>
<comment type="similarity">
    <text evidence="1">Belongs to the DTD family.</text>
</comment>